<gene>
    <name evidence="1" type="primary">hisF</name>
    <name type="ordered locus">Bcen_2676</name>
</gene>
<organism>
    <name type="scientific">Burkholderia orbicola (strain AU 1054)</name>
    <dbReference type="NCBI Taxonomy" id="331271"/>
    <lineage>
        <taxon>Bacteria</taxon>
        <taxon>Pseudomonadati</taxon>
        <taxon>Pseudomonadota</taxon>
        <taxon>Betaproteobacteria</taxon>
        <taxon>Burkholderiales</taxon>
        <taxon>Burkholderiaceae</taxon>
        <taxon>Burkholderia</taxon>
        <taxon>Burkholderia cepacia complex</taxon>
        <taxon>Burkholderia orbicola</taxon>
    </lineage>
</organism>
<feature type="chain" id="PRO_1000063034" description="Imidazole glycerol phosphate synthase subunit HisF">
    <location>
        <begin position="1"/>
        <end position="257"/>
    </location>
</feature>
<feature type="active site" evidence="1">
    <location>
        <position position="12"/>
    </location>
</feature>
<feature type="active site" evidence="1">
    <location>
        <position position="131"/>
    </location>
</feature>
<keyword id="KW-0028">Amino-acid biosynthesis</keyword>
<keyword id="KW-0963">Cytoplasm</keyword>
<keyword id="KW-0368">Histidine biosynthesis</keyword>
<keyword id="KW-0456">Lyase</keyword>
<proteinExistence type="inferred from homology"/>
<protein>
    <recommendedName>
        <fullName evidence="1">Imidazole glycerol phosphate synthase subunit HisF</fullName>
        <ecNumber evidence="1">4.3.2.10</ecNumber>
    </recommendedName>
    <alternativeName>
        <fullName evidence="1">IGP synthase cyclase subunit</fullName>
    </alternativeName>
    <alternativeName>
        <fullName evidence="1">IGP synthase subunit HisF</fullName>
    </alternativeName>
    <alternativeName>
        <fullName evidence="1">ImGP synthase subunit HisF</fullName>
        <shortName evidence="1">IGPS subunit HisF</shortName>
    </alternativeName>
</protein>
<evidence type="ECO:0000255" key="1">
    <source>
        <dbReference type="HAMAP-Rule" id="MF_01013"/>
    </source>
</evidence>
<reference key="1">
    <citation type="submission" date="2006-05" db="EMBL/GenBank/DDBJ databases">
        <title>Complete sequence of chromosome 1 of Burkholderia cenocepacia AU 1054.</title>
        <authorList>
            <consortium name="US DOE Joint Genome Institute"/>
            <person name="Copeland A."/>
            <person name="Lucas S."/>
            <person name="Lapidus A."/>
            <person name="Barry K."/>
            <person name="Detter J.C."/>
            <person name="Glavina del Rio T."/>
            <person name="Hammon N."/>
            <person name="Israni S."/>
            <person name="Dalin E."/>
            <person name="Tice H."/>
            <person name="Pitluck S."/>
            <person name="Chain P."/>
            <person name="Malfatti S."/>
            <person name="Shin M."/>
            <person name="Vergez L."/>
            <person name="Schmutz J."/>
            <person name="Larimer F."/>
            <person name="Land M."/>
            <person name="Hauser L."/>
            <person name="Kyrpides N."/>
            <person name="Lykidis A."/>
            <person name="LiPuma J.J."/>
            <person name="Konstantinidis K."/>
            <person name="Tiedje J.M."/>
            <person name="Richardson P."/>
        </authorList>
    </citation>
    <scope>NUCLEOTIDE SEQUENCE [LARGE SCALE GENOMIC DNA]</scope>
    <source>
        <strain>AU 1054</strain>
    </source>
</reference>
<sequence length="257" mass="27277">MALAKRIIPCLDVTAGRVVKGVNFVELRDAGDPVEIARRYDDQGADELTFLDITATSDQRDLILPIIEAVASQVFIPLTVGGGVRAVEDVRRLLNAGADKVSMNSSAVANPQLVRDAADKYGSQCIVVAIDAKRVSADGETPRWEVFTHGGRKNTGLDAIEWARKMAELGAGEILLTSMDRDGTKSGFDLALTRGVSDAVPVPVIASGGVGSLQHLADGIKDGRADAVLAASIFHYGEHTVGEAKRFMSDQGIPVRL</sequence>
<name>HIS6_BURO1</name>
<comment type="function">
    <text evidence="1">IGPS catalyzes the conversion of PRFAR and glutamine to IGP, AICAR and glutamate. The HisF subunit catalyzes the cyclization activity that produces IGP and AICAR from PRFAR using the ammonia provided by the HisH subunit.</text>
</comment>
<comment type="catalytic activity">
    <reaction evidence="1">
        <text>5-[(5-phospho-1-deoxy-D-ribulos-1-ylimino)methylamino]-1-(5-phospho-beta-D-ribosyl)imidazole-4-carboxamide + L-glutamine = D-erythro-1-(imidazol-4-yl)glycerol 3-phosphate + 5-amino-1-(5-phospho-beta-D-ribosyl)imidazole-4-carboxamide + L-glutamate + H(+)</text>
        <dbReference type="Rhea" id="RHEA:24793"/>
        <dbReference type="ChEBI" id="CHEBI:15378"/>
        <dbReference type="ChEBI" id="CHEBI:29985"/>
        <dbReference type="ChEBI" id="CHEBI:58278"/>
        <dbReference type="ChEBI" id="CHEBI:58359"/>
        <dbReference type="ChEBI" id="CHEBI:58475"/>
        <dbReference type="ChEBI" id="CHEBI:58525"/>
        <dbReference type="EC" id="4.3.2.10"/>
    </reaction>
</comment>
<comment type="pathway">
    <text evidence="1">Amino-acid biosynthesis; L-histidine biosynthesis; L-histidine from 5-phospho-alpha-D-ribose 1-diphosphate: step 5/9.</text>
</comment>
<comment type="subunit">
    <text evidence="1">Heterodimer of HisH and HisF.</text>
</comment>
<comment type="subcellular location">
    <subcellularLocation>
        <location evidence="1">Cytoplasm</location>
    </subcellularLocation>
</comment>
<comment type="similarity">
    <text evidence="1">Belongs to the HisA/HisF family.</text>
</comment>
<dbReference type="EC" id="4.3.2.10" evidence="1"/>
<dbReference type="EMBL" id="CP000378">
    <property type="protein sequence ID" value="ABF77574.1"/>
    <property type="molecule type" value="Genomic_DNA"/>
</dbReference>
<dbReference type="SMR" id="Q1BS31"/>
<dbReference type="HOGENOM" id="CLU_048577_4_0_4"/>
<dbReference type="UniPathway" id="UPA00031">
    <property type="reaction ID" value="UER00010"/>
</dbReference>
<dbReference type="GO" id="GO:0005737">
    <property type="term" value="C:cytoplasm"/>
    <property type="evidence" value="ECO:0007669"/>
    <property type="project" value="UniProtKB-SubCell"/>
</dbReference>
<dbReference type="GO" id="GO:0000107">
    <property type="term" value="F:imidazoleglycerol-phosphate synthase activity"/>
    <property type="evidence" value="ECO:0007669"/>
    <property type="project" value="UniProtKB-UniRule"/>
</dbReference>
<dbReference type="GO" id="GO:0016829">
    <property type="term" value="F:lyase activity"/>
    <property type="evidence" value="ECO:0007669"/>
    <property type="project" value="UniProtKB-KW"/>
</dbReference>
<dbReference type="GO" id="GO:0000105">
    <property type="term" value="P:L-histidine biosynthetic process"/>
    <property type="evidence" value="ECO:0007669"/>
    <property type="project" value="UniProtKB-UniRule"/>
</dbReference>
<dbReference type="CDD" id="cd04731">
    <property type="entry name" value="HisF"/>
    <property type="match status" value="1"/>
</dbReference>
<dbReference type="FunFam" id="3.20.20.70:FF:000006">
    <property type="entry name" value="Imidazole glycerol phosphate synthase subunit HisF"/>
    <property type="match status" value="1"/>
</dbReference>
<dbReference type="Gene3D" id="3.20.20.70">
    <property type="entry name" value="Aldolase class I"/>
    <property type="match status" value="1"/>
</dbReference>
<dbReference type="HAMAP" id="MF_01013">
    <property type="entry name" value="HisF"/>
    <property type="match status" value="1"/>
</dbReference>
<dbReference type="InterPro" id="IPR013785">
    <property type="entry name" value="Aldolase_TIM"/>
</dbReference>
<dbReference type="InterPro" id="IPR006062">
    <property type="entry name" value="His_biosynth"/>
</dbReference>
<dbReference type="InterPro" id="IPR004651">
    <property type="entry name" value="HisF"/>
</dbReference>
<dbReference type="InterPro" id="IPR050064">
    <property type="entry name" value="IGPS_HisA/HisF"/>
</dbReference>
<dbReference type="InterPro" id="IPR011060">
    <property type="entry name" value="RibuloseP-bd_barrel"/>
</dbReference>
<dbReference type="NCBIfam" id="TIGR00735">
    <property type="entry name" value="hisF"/>
    <property type="match status" value="1"/>
</dbReference>
<dbReference type="PANTHER" id="PTHR21235:SF2">
    <property type="entry name" value="IMIDAZOLE GLYCEROL PHOSPHATE SYNTHASE HISHF"/>
    <property type="match status" value="1"/>
</dbReference>
<dbReference type="PANTHER" id="PTHR21235">
    <property type="entry name" value="IMIDAZOLE GLYCEROL PHOSPHATE SYNTHASE SUBUNIT HISF/H IGP SYNTHASE SUBUNIT HISF/H"/>
    <property type="match status" value="1"/>
</dbReference>
<dbReference type="Pfam" id="PF00977">
    <property type="entry name" value="His_biosynth"/>
    <property type="match status" value="1"/>
</dbReference>
<dbReference type="SUPFAM" id="SSF51366">
    <property type="entry name" value="Ribulose-phoshate binding barrel"/>
    <property type="match status" value="1"/>
</dbReference>
<accession>Q1BS31</accession>